<proteinExistence type="inferred from homology"/>
<comment type="catalytic activity">
    <reaction evidence="1">
        <text>D-erythro-1-(imidazol-4-yl)glycerol 3-phosphate = 3-(imidazol-4-yl)-2-oxopropyl phosphate + H2O</text>
        <dbReference type="Rhea" id="RHEA:11040"/>
        <dbReference type="ChEBI" id="CHEBI:15377"/>
        <dbReference type="ChEBI" id="CHEBI:57766"/>
        <dbReference type="ChEBI" id="CHEBI:58278"/>
        <dbReference type="EC" id="4.2.1.19"/>
    </reaction>
</comment>
<comment type="pathway">
    <text evidence="1">Amino-acid biosynthesis; L-histidine biosynthesis; L-histidine from 5-phospho-alpha-D-ribose 1-diphosphate: step 6/9.</text>
</comment>
<comment type="subcellular location">
    <subcellularLocation>
        <location evidence="1">Cytoplasm</location>
    </subcellularLocation>
</comment>
<comment type="similarity">
    <text evidence="1">Belongs to the imidazoleglycerol-phosphate dehydratase family.</text>
</comment>
<gene>
    <name evidence="1" type="primary">hisB</name>
    <name type="ordered locus">Achl_1473</name>
</gene>
<name>HIS7_PSECP</name>
<accession>B8HGA0</accession>
<reference key="1">
    <citation type="submission" date="2009-01" db="EMBL/GenBank/DDBJ databases">
        <title>Complete sequence of chromosome of Arthrobacter chlorophenolicus A6.</title>
        <authorList>
            <consortium name="US DOE Joint Genome Institute"/>
            <person name="Lucas S."/>
            <person name="Copeland A."/>
            <person name="Lapidus A."/>
            <person name="Glavina del Rio T."/>
            <person name="Tice H."/>
            <person name="Bruce D."/>
            <person name="Goodwin L."/>
            <person name="Pitluck S."/>
            <person name="Goltsman E."/>
            <person name="Clum A."/>
            <person name="Larimer F."/>
            <person name="Land M."/>
            <person name="Hauser L."/>
            <person name="Kyrpides N."/>
            <person name="Mikhailova N."/>
            <person name="Jansson J."/>
            <person name="Richardson P."/>
        </authorList>
    </citation>
    <scope>NUCLEOTIDE SEQUENCE [LARGE SCALE GENOMIC DNA]</scope>
    <source>
        <strain>ATCC 700700 / DSM 12829 / CIP 107037 / JCM 12360 / KCTC 9906 / NCIMB 13794 / A6</strain>
    </source>
</reference>
<keyword id="KW-0028">Amino-acid biosynthesis</keyword>
<keyword id="KW-0963">Cytoplasm</keyword>
<keyword id="KW-0368">Histidine biosynthesis</keyword>
<keyword id="KW-0456">Lyase</keyword>
<organism>
    <name type="scientific">Pseudarthrobacter chlorophenolicus (strain ATCC 700700 / DSM 12829 / CIP 107037 / JCM 12360 / KCTC 9906 / NCIMB 13794 / A6)</name>
    <name type="common">Arthrobacter chlorophenolicus</name>
    <dbReference type="NCBI Taxonomy" id="452863"/>
    <lineage>
        <taxon>Bacteria</taxon>
        <taxon>Bacillati</taxon>
        <taxon>Actinomycetota</taxon>
        <taxon>Actinomycetes</taxon>
        <taxon>Micrococcales</taxon>
        <taxon>Micrococcaceae</taxon>
        <taxon>Pseudarthrobacter</taxon>
    </lineage>
</organism>
<feature type="chain" id="PRO_1000118211" description="Imidazoleglycerol-phosphate dehydratase">
    <location>
        <begin position="1"/>
        <end position="208"/>
    </location>
</feature>
<evidence type="ECO:0000255" key="1">
    <source>
        <dbReference type="HAMAP-Rule" id="MF_00076"/>
    </source>
</evidence>
<dbReference type="EC" id="4.2.1.19" evidence="1"/>
<dbReference type="EMBL" id="CP001341">
    <property type="protein sequence ID" value="ACL39462.1"/>
    <property type="molecule type" value="Genomic_DNA"/>
</dbReference>
<dbReference type="RefSeq" id="WP_015936684.1">
    <property type="nucleotide sequence ID" value="NC_011886.1"/>
</dbReference>
<dbReference type="SMR" id="B8HGA0"/>
<dbReference type="STRING" id="452863.Achl_1473"/>
<dbReference type="KEGG" id="ach:Achl_1473"/>
<dbReference type="eggNOG" id="COG0131">
    <property type="taxonomic scope" value="Bacteria"/>
</dbReference>
<dbReference type="HOGENOM" id="CLU_044308_3_0_11"/>
<dbReference type="OrthoDB" id="9790411at2"/>
<dbReference type="UniPathway" id="UPA00031">
    <property type="reaction ID" value="UER00011"/>
</dbReference>
<dbReference type="Proteomes" id="UP000002505">
    <property type="component" value="Chromosome"/>
</dbReference>
<dbReference type="GO" id="GO:0005737">
    <property type="term" value="C:cytoplasm"/>
    <property type="evidence" value="ECO:0007669"/>
    <property type="project" value="UniProtKB-SubCell"/>
</dbReference>
<dbReference type="GO" id="GO:0004424">
    <property type="term" value="F:imidazoleglycerol-phosphate dehydratase activity"/>
    <property type="evidence" value="ECO:0007669"/>
    <property type="project" value="UniProtKB-UniRule"/>
</dbReference>
<dbReference type="GO" id="GO:0000105">
    <property type="term" value="P:L-histidine biosynthetic process"/>
    <property type="evidence" value="ECO:0007669"/>
    <property type="project" value="UniProtKB-UniRule"/>
</dbReference>
<dbReference type="CDD" id="cd07914">
    <property type="entry name" value="IGPD"/>
    <property type="match status" value="1"/>
</dbReference>
<dbReference type="FunFam" id="3.30.230.40:FF:000001">
    <property type="entry name" value="Imidazoleglycerol-phosphate dehydratase HisB"/>
    <property type="match status" value="1"/>
</dbReference>
<dbReference type="FunFam" id="3.30.230.40:FF:000003">
    <property type="entry name" value="Imidazoleglycerol-phosphate dehydratase HisB"/>
    <property type="match status" value="1"/>
</dbReference>
<dbReference type="Gene3D" id="3.30.230.40">
    <property type="entry name" value="Imidazole glycerol phosphate dehydratase, domain 1"/>
    <property type="match status" value="2"/>
</dbReference>
<dbReference type="HAMAP" id="MF_00076">
    <property type="entry name" value="HisB"/>
    <property type="match status" value="1"/>
</dbReference>
<dbReference type="InterPro" id="IPR038494">
    <property type="entry name" value="IGPD_sf"/>
</dbReference>
<dbReference type="InterPro" id="IPR000807">
    <property type="entry name" value="ImidazoleglycerolP_deHydtase"/>
</dbReference>
<dbReference type="InterPro" id="IPR020565">
    <property type="entry name" value="ImidazoleglycerP_deHydtase_CS"/>
</dbReference>
<dbReference type="InterPro" id="IPR020568">
    <property type="entry name" value="Ribosomal_Su5_D2-typ_SF"/>
</dbReference>
<dbReference type="NCBIfam" id="NF002110">
    <property type="entry name" value="PRK00951.1-6"/>
    <property type="match status" value="1"/>
</dbReference>
<dbReference type="NCBIfam" id="NF002111">
    <property type="entry name" value="PRK00951.2-1"/>
    <property type="match status" value="1"/>
</dbReference>
<dbReference type="NCBIfam" id="NF002114">
    <property type="entry name" value="PRK00951.2-4"/>
    <property type="match status" value="1"/>
</dbReference>
<dbReference type="PANTHER" id="PTHR23133:SF2">
    <property type="entry name" value="IMIDAZOLEGLYCEROL-PHOSPHATE DEHYDRATASE"/>
    <property type="match status" value="1"/>
</dbReference>
<dbReference type="PANTHER" id="PTHR23133">
    <property type="entry name" value="IMIDAZOLEGLYCEROL-PHOSPHATE DEHYDRATASE HIS7"/>
    <property type="match status" value="1"/>
</dbReference>
<dbReference type="Pfam" id="PF00475">
    <property type="entry name" value="IGPD"/>
    <property type="match status" value="1"/>
</dbReference>
<dbReference type="SUPFAM" id="SSF54211">
    <property type="entry name" value="Ribosomal protein S5 domain 2-like"/>
    <property type="match status" value="2"/>
</dbReference>
<dbReference type="PROSITE" id="PS00954">
    <property type="entry name" value="IGP_DEHYDRATASE_1"/>
    <property type="match status" value="1"/>
</dbReference>
<dbReference type="PROSITE" id="PS00955">
    <property type="entry name" value="IGP_DEHYDRATASE_2"/>
    <property type="match status" value="1"/>
</dbReference>
<sequence length="208" mass="22123">MTSTGSNAAAARTARMERATSESSVLVEINLDGTGVSDIDTSVPFYDHMLTALCKHSLIDMTVKATGDTHIDVHHTVEDVAITFGEVLRTALGNKAGIRRFGEATVPLDEALANAVVDVSGRPYLVHGGEPAGQEYHLIGGHFTGSLTRHVFEAITLHAGICLHMNVIAGRDPHHIVEAQFKAFARALRAAVEPDPRVEGIPSTKGAL</sequence>
<protein>
    <recommendedName>
        <fullName evidence="1">Imidazoleglycerol-phosphate dehydratase</fullName>
        <shortName evidence="1">IGPD</shortName>
        <ecNumber evidence="1">4.2.1.19</ecNumber>
    </recommendedName>
</protein>